<name>CYB_AEPME</name>
<accession>Q9T9A5</accession>
<accession>O99341</accession>
<evidence type="ECO:0000250" key="1"/>
<evidence type="ECO:0000250" key="2">
    <source>
        <dbReference type="UniProtKB" id="P00157"/>
    </source>
</evidence>
<evidence type="ECO:0000255" key="3">
    <source>
        <dbReference type="PROSITE-ProRule" id="PRU00967"/>
    </source>
</evidence>
<evidence type="ECO:0000255" key="4">
    <source>
        <dbReference type="PROSITE-ProRule" id="PRU00968"/>
    </source>
</evidence>
<evidence type="ECO:0000305" key="5"/>
<gene>
    <name type="primary">MT-CYB</name>
    <name type="synonym">COB</name>
    <name type="synonym">CYTB</name>
    <name type="synonym">MTCYB</name>
</gene>
<sequence>MTNIWKSHPLMKIINNAFIDLPAPSNISSWWNFGSLLGICLILQILTGLFLAMHYTSDTTTAFSSVTHICRDVNYGWIIRYMHANGASMFFICLFMHVGRGLYYGSYLFLETWNIGIILLFATMATAFMGYVLPWGQMSFWGATVITNLLSAIPYIGTNLVEWIWGGFSVDKATLTRFFAFHFIFPFIIAALAMVHLLFLHETGSNNPTGILSDSDKIPFHPYYTIKDILGILLMILVLMLLVLFMPDLLGDPDNYIPANPLNTPPHIKPEWYFLFAYAILRSIPNKLGGVLALVLSILILALMPMLHMSKQRSMMFRPISQCLFWILVADLLTLTWIGGQPVEHPYIIIGQLASIMYFILILVMMPVASTIENNLLKW</sequence>
<proteinExistence type="inferred from homology"/>
<reference key="1">
    <citation type="journal article" date="1999" name="Mol. Phylogenet. Evol.">
        <title>The tribal radiation of the family Bovidae (Artiodactyla) and the evolution of the mitochondrial cytochrome b gene.</title>
        <authorList>
            <person name="Hassanin A."/>
            <person name="Douzery E.J.P."/>
        </authorList>
    </citation>
    <scope>NUCLEOTIDE SEQUENCE [GENOMIC DNA]</scope>
</reference>
<reference key="2">
    <citation type="journal article" date="1999" name="Mol. Phylogenet. Evol.">
        <title>Cytochrome b phylogeny of the family bovidae: resolution within the alcelaphini, antilopini, neotragini, and tragelaphini.</title>
        <authorList>
            <person name="Matthee C.A."/>
            <person name="Robinson T.J."/>
        </authorList>
    </citation>
    <scope>NUCLEOTIDE SEQUENCE [GENOMIC DNA]</scope>
</reference>
<keyword id="KW-0249">Electron transport</keyword>
<keyword id="KW-0349">Heme</keyword>
<keyword id="KW-0408">Iron</keyword>
<keyword id="KW-0472">Membrane</keyword>
<keyword id="KW-0479">Metal-binding</keyword>
<keyword id="KW-0496">Mitochondrion</keyword>
<keyword id="KW-0999">Mitochondrion inner membrane</keyword>
<keyword id="KW-0679">Respiratory chain</keyword>
<keyword id="KW-0812">Transmembrane</keyword>
<keyword id="KW-1133">Transmembrane helix</keyword>
<keyword id="KW-0813">Transport</keyword>
<keyword id="KW-0830">Ubiquinone</keyword>
<geneLocation type="mitochondrion"/>
<dbReference type="EMBL" id="AF036289">
    <property type="protein sequence ID" value="AAD51440.1"/>
    <property type="molecule type" value="Genomic_DNA"/>
</dbReference>
<dbReference type="EMBL" id="AF022056">
    <property type="protein sequence ID" value="AAD13490.1"/>
    <property type="molecule type" value="Genomic_DNA"/>
</dbReference>
<dbReference type="SMR" id="Q9T9A5"/>
<dbReference type="GO" id="GO:0005743">
    <property type="term" value="C:mitochondrial inner membrane"/>
    <property type="evidence" value="ECO:0007669"/>
    <property type="project" value="UniProtKB-SubCell"/>
</dbReference>
<dbReference type="GO" id="GO:0045275">
    <property type="term" value="C:respiratory chain complex III"/>
    <property type="evidence" value="ECO:0007669"/>
    <property type="project" value="InterPro"/>
</dbReference>
<dbReference type="GO" id="GO:0046872">
    <property type="term" value="F:metal ion binding"/>
    <property type="evidence" value="ECO:0007669"/>
    <property type="project" value="UniProtKB-KW"/>
</dbReference>
<dbReference type="GO" id="GO:0008121">
    <property type="term" value="F:ubiquinol-cytochrome-c reductase activity"/>
    <property type="evidence" value="ECO:0007669"/>
    <property type="project" value="InterPro"/>
</dbReference>
<dbReference type="GO" id="GO:0006122">
    <property type="term" value="P:mitochondrial electron transport, ubiquinol to cytochrome c"/>
    <property type="evidence" value="ECO:0007669"/>
    <property type="project" value="TreeGrafter"/>
</dbReference>
<dbReference type="CDD" id="cd00290">
    <property type="entry name" value="cytochrome_b_C"/>
    <property type="match status" value="1"/>
</dbReference>
<dbReference type="CDD" id="cd00284">
    <property type="entry name" value="Cytochrome_b_N"/>
    <property type="match status" value="1"/>
</dbReference>
<dbReference type="FunFam" id="1.20.810.10:FF:000002">
    <property type="entry name" value="Cytochrome b"/>
    <property type="match status" value="1"/>
</dbReference>
<dbReference type="Gene3D" id="1.20.810.10">
    <property type="entry name" value="Cytochrome Bc1 Complex, Chain C"/>
    <property type="match status" value="1"/>
</dbReference>
<dbReference type="InterPro" id="IPR005798">
    <property type="entry name" value="Cyt_b/b6_C"/>
</dbReference>
<dbReference type="InterPro" id="IPR036150">
    <property type="entry name" value="Cyt_b/b6_C_sf"/>
</dbReference>
<dbReference type="InterPro" id="IPR005797">
    <property type="entry name" value="Cyt_b/b6_N"/>
</dbReference>
<dbReference type="InterPro" id="IPR027387">
    <property type="entry name" value="Cytb/b6-like_sf"/>
</dbReference>
<dbReference type="InterPro" id="IPR030689">
    <property type="entry name" value="Cytochrome_b"/>
</dbReference>
<dbReference type="InterPro" id="IPR048260">
    <property type="entry name" value="Cytochrome_b_C_euk/bac"/>
</dbReference>
<dbReference type="InterPro" id="IPR048259">
    <property type="entry name" value="Cytochrome_b_N_euk/bac"/>
</dbReference>
<dbReference type="InterPro" id="IPR016174">
    <property type="entry name" value="Di-haem_cyt_TM"/>
</dbReference>
<dbReference type="PANTHER" id="PTHR19271">
    <property type="entry name" value="CYTOCHROME B"/>
    <property type="match status" value="1"/>
</dbReference>
<dbReference type="PANTHER" id="PTHR19271:SF16">
    <property type="entry name" value="CYTOCHROME B"/>
    <property type="match status" value="1"/>
</dbReference>
<dbReference type="Pfam" id="PF00032">
    <property type="entry name" value="Cytochrom_B_C"/>
    <property type="match status" value="1"/>
</dbReference>
<dbReference type="Pfam" id="PF00033">
    <property type="entry name" value="Cytochrome_B"/>
    <property type="match status" value="1"/>
</dbReference>
<dbReference type="PIRSF" id="PIRSF038885">
    <property type="entry name" value="COB"/>
    <property type="match status" value="1"/>
</dbReference>
<dbReference type="SUPFAM" id="SSF81648">
    <property type="entry name" value="a domain/subunit of cytochrome bc1 complex (Ubiquinol-cytochrome c reductase)"/>
    <property type="match status" value="1"/>
</dbReference>
<dbReference type="SUPFAM" id="SSF81342">
    <property type="entry name" value="Transmembrane di-heme cytochromes"/>
    <property type="match status" value="1"/>
</dbReference>
<dbReference type="PROSITE" id="PS51003">
    <property type="entry name" value="CYTB_CTER"/>
    <property type="match status" value="1"/>
</dbReference>
<dbReference type="PROSITE" id="PS51002">
    <property type="entry name" value="CYTB_NTER"/>
    <property type="match status" value="1"/>
</dbReference>
<feature type="chain" id="PRO_0000060533" description="Cytochrome b">
    <location>
        <begin position="1"/>
        <end position="379"/>
    </location>
</feature>
<feature type="transmembrane region" description="Helical" evidence="2">
    <location>
        <begin position="33"/>
        <end position="53"/>
    </location>
</feature>
<feature type="transmembrane region" description="Helical" evidence="2">
    <location>
        <begin position="77"/>
        <end position="98"/>
    </location>
</feature>
<feature type="transmembrane region" description="Helical" evidence="2">
    <location>
        <begin position="113"/>
        <end position="133"/>
    </location>
</feature>
<feature type="transmembrane region" description="Helical" evidence="2">
    <location>
        <begin position="178"/>
        <end position="198"/>
    </location>
</feature>
<feature type="transmembrane region" description="Helical" evidence="2">
    <location>
        <begin position="226"/>
        <end position="246"/>
    </location>
</feature>
<feature type="transmembrane region" description="Helical" evidence="2">
    <location>
        <begin position="288"/>
        <end position="308"/>
    </location>
</feature>
<feature type="transmembrane region" description="Helical" evidence="2">
    <location>
        <begin position="320"/>
        <end position="340"/>
    </location>
</feature>
<feature type="transmembrane region" description="Helical" evidence="2">
    <location>
        <begin position="347"/>
        <end position="367"/>
    </location>
</feature>
<feature type="binding site" description="axial binding residue" evidence="2">
    <location>
        <position position="83"/>
    </location>
    <ligand>
        <name>heme b</name>
        <dbReference type="ChEBI" id="CHEBI:60344"/>
        <label>b562</label>
    </ligand>
    <ligandPart>
        <name>Fe</name>
        <dbReference type="ChEBI" id="CHEBI:18248"/>
    </ligandPart>
</feature>
<feature type="binding site" description="axial binding residue" evidence="2">
    <location>
        <position position="97"/>
    </location>
    <ligand>
        <name>heme b</name>
        <dbReference type="ChEBI" id="CHEBI:60344"/>
        <label>b566</label>
    </ligand>
    <ligandPart>
        <name>Fe</name>
        <dbReference type="ChEBI" id="CHEBI:18248"/>
    </ligandPart>
</feature>
<feature type="binding site" description="axial binding residue" evidence="2">
    <location>
        <position position="182"/>
    </location>
    <ligand>
        <name>heme b</name>
        <dbReference type="ChEBI" id="CHEBI:60344"/>
        <label>b562</label>
    </ligand>
    <ligandPart>
        <name>Fe</name>
        <dbReference type="ChEBI" id="CHEBI:18248"/>
    </ligandPart>
</feature>
<feature type="binding site" description="axial binding residue" evidence="2">
    <location>
        <position position="196"/>
    </location>
    <ligand>
        <name>heme b</name>
        <dbReference type="ChEBI" id="CHEBI:60344"/>
        <label>b566</label>
    </ligand>
    <ligandPart>
        <name>Fe</name>
        <dbReference type="ChEBI" id="CHEBI:18248"/>
    </ligandPart>
</feature>
<feature type="binding site" evidence="2">
    <location>
        <position position="201"/>
    </location>
    <ligand>
        <name>a ubiquinone</name>
        <dbReference type="ChEBI" id="CHEBI:16389"/>
    </ligand>
</feature>
<feature type="sequence conflict" description="In Ref. 2; AAD13490." evidence="5" ref="2">
    <original>N</original>
    <variation>T</variation>
    <location>
        <position position="3"/>
    </location>
</feature>
<feature type="sequence conflict" description="In Ref. 2; AAD13490." evidence="5" ref="2">
    <original>S</original>
    <variation>T</variation>
    <location>
        <position position="7"/>
    </location>
</feature>
<feature type="sequence conflict" description="In Ref. 2; AAD13490." evidence="5" ref="2">
    <original>I</original>
    <variation>D</variation>
    <location>
        <position position="14"/>
    </location>
</feature>
<feature type="sequence conflict" description="In Ref. 2; AAD13490." evidence="5" ref="2">
    <original>L</original>
    <variation>S</variation>
    <location>
        <position position="212"/>
    </location>
</feature>
<feature type="sequence conflict" description="In Ref. 2; AAD13490." evidence="5" ref="2">
    <original>I</original>
    <variation>V</variation>
    <location>
        <position position="232"/>
    </location>
</feature>
<feature type="sequence conflict" description="In Ref. 2; AAD13490." evidence="5" ref="2">
    <original>M</original>
    <variation>T</variation>
    <location>
        <position position="246"/>
    </location>
</feature>
<feature type="sequence conflict" description="In Ref. 2; AAD13490." evidence="5" ref="2">
    <original>I</original>
    <variation>T</variation>
    <location>
        <position position="257"/>
    </location>
</feature>
<feature type="sequence conflict" description="In Ref. 2; AAD13490." evidence="5" ref="2">
    <original>I</original>
    <variation>V</variation>
    <location>
        <position position="280"/>
    </location>
</feature>
<feature type="sequence conflict" description="In Ref. 2; AAD13490." evidence="5" ref="2">
    <original>L</original>
    <variation>F</variation>
    <location>
        <position position="335"/>
    </location>
</feature>
<feature type="sequence conflict" description="In Ref. 2; AAD13490." evidence="5" ref="2">
    <original>I</original>
    <variation>T</variation>
    <location>
        <position position="360"/>
    </location>
</feature>
<feature type="sequence conflict" description="In Ref. 2; AAD13490." evidence="5" ref="2">
    <original>M</original>
    <variation>L</variation>
    <location>
        <position position="365"/>
    </location>
</feature>
<comment type="function">
    <text evidence="2">Component of the ubiquinol-cytochrome c reductase complex (complex III or cytochrome b-c1 complex) that is part of the mitochondrial respiratory chain. The b-c1 complex mediates electron transfer from ubiquinol to cytochrome c. Contributes to the generation of a proton gradient across the mitochondrial membrane that is then used for ATP synthesis.</text>
</comment>
<comment type="cofactor">
    <cofactor evidence="2">
        <name>heme b</name>
        <dbReference type="ChEBI" id="CHEBI:60344"/>
    </cofactor>
    <text evidence="2">Binds 2 heme b groups non-covalently.</text>
</comment>
<comment type="subunit">
    <text evidence="2">The cytochrome bc1 complex contains 11 subunits: 3 respiratory subunits (MT-CYB, CYC1 and UQCRFS1), 2 core proteins (UQCRC1 and UQCRC2) and 6 low-molecular weight proteins (UQCRH/QCR6, UQCRB/QCR7, UQCRQ/QCR8, UQCR10/QCR9, UQCR11/QCR10 and a cleavage product of UQCRFS1). This cytochrome bc1 complex then forms a dimer.</text>
</comment>
<comment type="subcellular location">
    <subcellularLocation>
        <location evidence="2">Mitochondrion inner membrane</location>
        <topology evidence="2">Multi-pass membrane protein</topology>
    </subcellularLocation>
</comment>
<comment type="miscellaneous">
    <text evidence="1">Heme 1 (or BL or b562) is low-potential and absorbs at about 562 nm, and heme 2 (or BH or b566) is high-potential and absorbs at about 566 nm.</text>
</comment>
<comment type="similarity">
    <text evidence="3 4">Belongs to the cytochrome b family.</text>
</comment>
<comment type="caution">
    <text evidence="2">The full-length protein contains only eight transmembrane helices, not nine as predicted by bioinformatics tools.</text>
</comment>
<protein>
    <recommendedName>
        <fullName>Cytochrome b</fullName>
    </recommendedName>
    <alternativeName>
        <fullName>Complex III subunit 3</fullName>
    </alternativeName>
    <alternativeName>
        <fullName>Complex III subunit III</fullName>
    </alternativeName>
    <alternativeName>
        <fullName>Cytochrome b-c1 complex subunit 3</fullName>
    </alternativeName>
    <alternativeName>
        <fullName>Ubiquinol-cytochrome-c reductase complex cytochrome b subunit</fullName>
    </alternativeName>
</protein>
<organism>
    <name type="scientific">Aepyceros melampus</name>
    <name type="common">Impala</name>
    <dbReference type="NCBI Taxonomy" id="9897"/>
    <lineage>
        <taxon>Eukaryota</taxon>
        <taxon>Metazoa</taxon>
        <taxon>Chordata</taxon>
        <taxon>Craniata</taxon>
        <taxon>Vertebrata</taxon>
        <taxon>Euteleostomi</taxon>
        <taxon>Mammalia</taxon>
        <taxon>Eutheria</taxon>
        <taxon>Laurasiatheria</taxon>
        <taxon>Artiodactyla</taxon>
        <taxon>Ruminantia</taxon>
        <taxon>Pecora</taxon>
        <taxon>Bovidae</taxon>
        <taxon>Aepycerotinae</taxon>
        <taxon>Aepyceros</taxon>
    </lineage>
</organism>